<name>NAPA_SHEHH</name>
<gene>
    <name evidence="1" type="primary">napA</name>
    <name type="ordered locus">Shal_0715</name>
</gene>
<accession>B0TSW5</accession>
<protein>
    <recommendedName>
        <fullName evidence="1">Periplasmic nitrate reductase</fullName>
        <ecNumber evidence="1">1.9.6.1</ecNumber>
    </recommendedName>
</protein>
<organism>
    <name type="scientific">Shewanella halifaxensis (strain HAW-EB4)</name>
    <dbReference type="NCBI Taxonomy" id="458817"/>
    <lineage>
        <taxon>Bacteria</taxon>
        <taxon>Pseudomonadati</taxon>
        <taxon>Pseudomonadota</taxon>
        <taxon>Gammaproteobacteria</taxon>
        <taxon>Alteromonadales</taxon>
        <taxon>Shewanellaceae</taxon>
        <taxon>Shewanella</taxon>
    </lineage>
</organism>
<proteinExistence type="inferred from homology"/>
<keyword id="KW-0004">4Fe-4S</keyword>
<keyword id="KW-0249">Electron transport</keyword>
<keyword id="KW-0408">Iron</keyword>
<keyword id="KW-0411">Iron-sulfur</keyword>
<keyword id="KW-0479">Metal-binding</keyword>
<keyword id="KW-0500">Molybdenum</keyword>
<keyword id="KW-0534">Nitrate assimilation</keyword>
<keyword id="KW-0560">Oxidoreductase</keyword>
<keyword id="KW-0574">Periplasm</keyword>
<keyword id="KW-0732">Signal</keyword>
<keyword id="KW-0813">Transport</keyword>
<feature type="signal peptide" description="Tat-type signal" evidence="1">
    <location>
        <begin position="1"/>
        <end position="32"/>
    </location>
</feature>
<feature type="chain" id="PRO_1000088120" description="Periplasmic nitrate reductase" evidence="1">
    <location>
        <begin position="33"/>
        <end position="826"/>
    </location>
</feature>
<feature type="domain" description="4Fe-4S Mo/W bis-MGD-type" evidence="1">
    <location>
        <begin position="39"/>
        <end position="95"/>
    </location>
</feature>
<feature type="binding site" evidence="1">
    <location>
        <position position="46"/>
    </location>
    <ligand>
        <name>[4Fe-4S] cluster</name>
        <dbReference type="ChEBI" id="CHEBI:49883"/>
    </ligand>
</feature>
<feature type="binding site" evidence="1">
    <location>
        <position position="49"/>
    </location>
    <ligand>
        <name>[4Fe-4S] cluster</name>
        <dbReference type="ChEBI" id="CHEBI:49883"/>
    </ligand>
</feature>
<feature type="binding site" evidence="1">
    <location>
        <position position="53"/>
    </location>
    <ligand>
        <name>[4Fe-4S] cluster</name>
        <dbReference type="ChEBI" id="CHEBI:49883"/>
    </ligand>
</feature>
<feature type="binding site" evidence="1">
    <location>
        <position position="81"/>
    </location>
    <ligand>
        <name>[4Fe-4S] cluster</name>
        <dbReference type="ChEBI" id="CHEBI:49883"/>
    </ligand>
</feature>
<feature type="binding site" evidence="1">
    <location>
        <position position="83"/>
    </location>
    <ligand>
        <name>Mo-bis(molybdopterin guanine dinucleotide)</name>
        <dbReference type="ChEBI" id="CHEBI:60539"/>
    </ligand>
</feature>
<feature type="binding site" evidence="1">
    <location>
        <position position="150"/>
    </location>
    <ligand>
        <name>Mo-bis(molybdopterin guanine dinucleotide)</name>
        <dbReference type="ChEBI" id="CHEBI:60539"/>
    </ligand>
</feature>
<feature type="binding site" evidence="1">
    <location>
        <position position="175"/>
    </location>
    <ligand>
        <name>Mo-bis(molybdopterin guanine dinucleotide)</name>
        <dbReference type="ChEBI" id="CHEBI:60539"/>
    </ligand>
</feature>
<feature type="binding site" evidence="1">
    <location>
        <position position="179"/>
    </location>
    <ligand>
        <name>Mo-bis(molybdopterin guanine dinucleotide)</name>
        <dbReference type="ChEBI" id="CHEBI:60539"/>
    </ligand>
</feature>
<feature type="binding site" evidence="1">
    <location>
        <begin position="212"/>
        <end position="219"/>
    </location>
    <ligand>
        <name>Mo-bis(molybdopterin guanine dinucleotide)</name>
        <dbReference type="ChEBI" id="CHEBI:60539"/>
    </ligand>
</feature>
<feature type="binding site" evidence="1">
    <location>
        <begin position="262"/>
        <end position="264"/>
    </location>
    <ligand>
        <name>Mo-bis(molybdopterin guanine dinucleotide)</name>
        <dbReference type="ChEBI" id="CHEBI:60539"/>
    </ligand>
</feature>
<feature type="binding site" evidence="1">
    <location>
        <position position="372"/>
    </location>
    <ligand>
        <name>Mo-bis(molybdopterin guanine dinucleotide)</name>
        <dbReference type="ChEBI" id="CHEBI:60539"/>
    </ligand>
</feature>
<feature type="binding site" evidence="1">
    <location>
        <position position="376"/>
    </location>
    <ligand>
        <name>Mo-bis(molybdopterin guanine dinucleotide)</name>
        <dbReference type="ChEBI" id="CHEBI:60539"/>
    </ligand>
</feature>
<feature type="binding site" evidence="1">
    <location>
        <position position="482"/>
    </location>
    <ligand>
        <name>Mo-bis(molybdopterin guanine dinucleotide)</name>
        <dbReference type="ChEBI" id="CHEBI:60539"/>
    </ligand>
</feature>
<feature type="binding site" evidence="1">
    <location>
        <begin position="508"/>
        <end position="509"/>
    </location>
    <ligand>
        <name>Mo-bis(molybdopterin guanine dinucleotide)</name>
        <dbReference type="ChEBI" id="CHEBI:60539"/>
    </ligand>
</feature>
<feature type="binding site" evidence="1">
    <location>
        <position position="531"/>
    </location>
    <ligand>
        <name>Mo-bis(molybdopterin guanine dinucleotide)</name>
        <dbReference type="ChEBI" id="CHEBI:60539"/>
    </ligand>
</feature>
<feature type="binding site" evidence="1">
    <location>
        <position position="558"/>
    </location>
    <ligand>
        <name>Mo-bis(molybdopterin guanine dinucleotide)</name>
        <dbReference type="ChEBI" id="CHEBI:60539"/>
    </ligand>
</feature>
<feature type="binding site" evidence="1">
    <location>
        <begin position="716"/>
        <end position="725"/>
    </location>
    <ligand>
        <name>Mo-bis(molybdopterin guanine dinucleotide)</name>
        <dbReference type="ChEBI" id="CHEBI:60539"/>
    </ligand>
</feature>
<feature type="binding site" evidence="1">
    <location>
        <position position="792"/>
    </location>
    <ligand>
        <name>substrate</name>
    </ligand>
</feature>
<feature type="binding site" evidence="1">
    <location>
        <position position="800"/>
    </location>
    <ligand>
        <name>Mo-bis(molybdopterin guanine dinucleotide)</name>
        <dbReference type="ChEBI" id="CHEBI:60539"/>
    </ligand>
</feature>
<feature type="binding site" evidence="1">
    <location>
        <position position="817"/>
    </location>
    <ligand>
        <name>Mo-bis(molybdopterin guanine dinucleotide)</name>
        <dbReference type="ChEBI" id="CHEBI:60539"/>
    </ligand>
</feature>
<comment type="function">
    <text evidence="1">Catalytic subunit of the periplasmic nitrate reductase complex NapAB. Receives electrons from NapB and catalyzes the reduction of nitrate to nitrite.</text>
</comment>
<comment type="catalytic activity">
    <reaction evidence="1">
        <text>2 Fe(II)-[cytochrome] + nitrate + 2 H(+) = 2 Fe(III)-[cytochrome] + nitrite + H2O</text>
        <dbReference type="Rhea" id="RHEA:12909"/>
        <dbReference type="Rhea" id="RHEA-COMP:11777"/>
        <dbReference type="Rhea" id="RHEA-COMP:11778"/>
        <dbReference type="ChEBI" id="CHEBI:15377"/>
        <dbReference type="ChEBI" id="CHEBI:15378"/>
        <dbReference type="ChEBI" id="CHEBI:16301"/>
        <dbReference type="ChEBI" id="CHEBI:17632"/>
        <dbReference type="ChEBI" id="CHEBI:29033"/>
        <dbReference type="ChEBI" id="CHEBI:29034"/>
        <dbReference type="EC" id="1.9.6.1"/>
    </reaction>
</comment>
<comment type="cofactor">
    <cofactor evidence="1">
        <name>[4Fe-4S] cluster</name>
        <dbReference type="ChEBI" id="CHEBI:49883"/>
    </cofactor>
    <text evidence="1">Binds 1 [4Fe-4S] cluster.</text>
</comment>
<comment type="cofactor">
    <cofactor evidence="1">
        <name>Mo-bis(molybdopterin guanine dinucleotide)</name>
        <dbReference type="ChEBI" id="CHEBI:60539"/>
    </cofactor>
    <text evidence="1">Binds 1 molybdenum-bis(molybdopterin guanine dinucleotide) (Mo-bis-MGD) cofactor per subunit.</text>
</comment>
<comment type="subunit">
    <text evidence="1">Component of the periplasmic nitrate reductase NapAB complex composed of NapA and NapB.</text>
</comment>
<comment type="subcellular location">
    <subcellularLocation>
        <location evidence="1">Periplasm</location>
    </subcellularLocation>
</comment>
<comment type="PTM">
    <text evidence="1">Predicted to be exported by the Tat system. The position of the signal peptide cleavage has not been experimentally proven.</text>
</comment>
<comment type="similarity">
    <text evidence="1">Belongs to the prokaryotic molybdopterin-containing oxidoreductase family. NasA/NapA/NarB subfamily.</text>
</comment>
<dbReference type="EC" id="1.9.6.1" evidence="1"/>
<dbReference type="EMBL" id="CP000931">
    <property type="protein sequence ID" value="ABZ75290.1"/>
    <property type="molecule type" value="Genomic_DNA"/>
</dbReference>
<dbReference type="RefSeq" id="WP_012275844.1">
    <property type="nucleotide sequence ID" value="NC_010334.1"/>
</dbReference>
<dbReference type="SMR" id="B0TSW5"/>
<dbReference type="STRING" id="458817.Shal_0715"/>
<dbReference type="KEGG" id="shl:Shal_0715"/>
<dbReference type="eggNOG" id="COG0243">
    <property type="taxonomic scope" value="Bacteria"/>
</dbReference>
<dbReference type="HOGENOM" id="CLU_000422_13_4_6"/>
<dbReference type="OrthoDB" id="9810782at2"/>
<dbReference type="Proteomes" id="UP000001317">
    <property type="component" value="Chromosome"/>
</dbReference>
<dbReference type="GO" id="GO:0016020">
    <property type="term" value="C:membrane"/>
    <property type="evidence" value="ECO:0007669"/>
    <property type="project" value="TreeGrafter"/>
</dbReference>
<dbReference type="GO" id="GO:0009325">
    <property type="term" value="C:nitrate reductase complex"/>
    <property type="evidence" value="ECO:0007669"/>
    <property type="project" value="TreeGrafter"/>
</dbReference>
<dbReference type="GO" id="GO:0042597">
    <property type="term" value="C:periplasmic space"/>
    <property type="evidence" value="ECO:0007669"/>
    <property type="project" value="UniProtKB-SubCell"/>
</dbReference>
<dbReference type="GO" id="GO:0051539">
    <property type="term" value="F:4 iron, 4 sulfur cluster binding"/>
    <property type="evidence" value="ECO:0007669"/>
    <property type="project" value="UniProtKB-KW"/>
</dbReference>
<dbReference type="GO" id="GO:0009055">
    <property type="term" value="F:electron transfer activity"/>
    <property type="evidence" value="ECO:0007669"/>
    <property type="project" value="UniProtKB-UniRule"/>
</dbReference>
<dbReference type="GO" id="GO:0005506">
    <property type="term" value="F:iron ion binding"/>
    <property type="evidence" value="ECO:0007669"/>
    <property type="project" value="UniProtKB-UniRule"/>
</dbReference>
<dbReference type="GO" id="GO:0030151">
    <property type="term" value="F:molybdenum ion binding"/>
    <property type="evidence" value="ECO:0007669"/>
    <property type="project" value="InterPro"/>
</dbReference>
<dbReference type="GO" id="GO:0043546">
    <property type="term" value="F:molybdopterin cofactor binding"/>
    <property type="evidence" value="ECO:0007669"/>
    <property type="project" value="InterPro"/>
</dbReference>
<dbReference type="GO" id="GO:0050140">
    <property type="term" value="F:nitrate reductase (cytochrome) activity"/>
    <property type="evidence" value="ECO:0007669"/>
    <property type="project" value="UniProtKB-EC"/>
</dbReference>
<dbReference type="GO" id="GO:0045333">
    <property type="term" value="P:cellular respiration"/>
    <property type="evidence" value="ECO:0007669"/>
    <property type="project" value="UniProtKB-ARBA"/>
</dbReference>
<dbReference type="GO" id="GO:0006777">
    <property type="term" value="P:Mo-molybdopterin cofactor biosynthetic process"/>
    <property type="evidence" value="ECO:0007669"/>
    <property type="project" value="UniProtKB-UniRule"/>
</dbReference>
<dbReference type="GO" id="GO:0042128">
    <property type="term" value="P:nitrate assimilation"/>
    <property type="evidence" value="ECO:0007669"/>
    <property type="project" value="UniProtKB-UniRule"/>
</dbReference>
<dbReference type="CDD" id="cd02791">
    <property type="entry name" value="MopB_CT_Nitrate-R-NapA-like"/>
    <property type="match status" value="1"/>
</dbReference>
<dbReference type="CDD" id="cd02754">
    <property type="entry name" value="MopB_Nitrate-R-NapA-like"/>
    <property type="match status" value="1"/>
</dbReference>
<dbReference type="FunFam" id="2.40.40.20:FF:000005">
    <property type="entry name" value="Periplasmic nitrate reductase"/>
    <property type="match status" value="1"/>
</dbReference>
<dbReference type="Gene3D" id="2.40.40.20">
    <property type="match status" value="1"/>
</dbReference>
<dbReference type="Gene3D" id="3.30.200.210">
    <property type="match status" value="1"/>
</dbReference>
<dbReference type="Gene3D" id="3.40.50.740">
    <property type="match status" value="1"/>
</dbReference>
<dbReference type="Gene3D" id="3.40.228.10">
    <property type="entry name" value="Dimethylsulfoxide Reductase, domain 2"/>
    <property type="match status" value="1"/>
</dbReference>
<dbReference type="HAMAP" id="MF_01630">
    <property type="entry name" value="Nitrate_reduct_NapA"/>
    <property type="match status" value="1"/>
</dbReference>
<dbReference type="InterPro" id="IPR009010">
    <property type="entry name" value="Asp_de-COase-like_dom_sf"/>
</dbReference>
<dbReference type="InterPro" id="IPR041957">
    <property type="entry name" value="CT_Nitrate-R-NapA-like"/>
</dbReference>
<dbReference type="InterPro" id="IPR006657">
    <property type="entry name" value="MoPterin_dinucl-bd_dom"/>
</dbReference>
<dbReference type="InterPro" id="IPR006656">
    <property type="entry name" value="Mopterin_OxRdtase"/>
</dbReference>
<dbReference type="InterPro" id="IPR006963">
    <property type="entry name" value="Mopterin_OxRdtase_4Fe-4S_dom"/>
</dbReference>
<dbReference type="InterPro" id="IPR027467">
    <property type="entry name" value="MopterinOxRdtase_cofactor_BS"/>
</dbReference>
<dbReference type="InterPro" id="IPR010051">
    <property type="entry name" value="Periplasm_NO3_reductase_lsu"/>
</dbReference>
<dbReference type="InterPro" id="IPR050123">
    <property type="entry name" value="Prok_molybdopt-oxidoreductase"/>
</dbReference>
<dbReference type="InterPro" id="IPR006311">
    <property type="entry name" value="TAT_signal"/>
</dbReference>
<dbReference type="InterPro" id="IPR019546">
    <property type="entry name" value="TAT_signal_bac_arc"/>
</dbReference>
<dbReference type="NCBIfam" id="TIGR01706">
    <property type="entry name" value="NAPA"/>
    <property type="match status" value="1"/>
</dbReference>
<dbReference type="NCBIfam" id="NF010055">
    <property type="entry name" value="PRK13532.1"/>
    <property type="match status" value="1"/>
</dbReference>
<dbReference type="NCBIfam" id="TIGR01409">
    <property type="entry name" value="TAT_signal_seq"/>
    <property type="match status" value="1"/>
</dbReference>
<dbReference type="PANTHER" id="PTHR43105:SF11">
    <property type="entry name" value="PERIPLASMIC NITRATE REDUCTASE"/>
    <property type="match status" value="1"/>
</dbReference>
<dbReference type="PANTHER" id="PTHR43105">
    <property type="entry name" value="RESPIRATORY NITRATE REDUCTASE"/>
    <property type="match status" value="1"/>
</dbReference>
<dbReference type="Pfam" id="PF04879">
    <property type="entry name" value="Molybdop_Fe4S4"/>
    <property type="match status" value="1"/>
</dbReference>
<dbReference type="Pfam" id="PF00384">
    <property type="entry name" value="Molybdopterin"/>
    <property type="match status" value="1"/>
</dbReference>
<dbReference type="Pfam" id="PF01568">
    <property type="entry name" value="Molydop_binding"/>
    <property type="match status" value="1"/>
</dbReference>
<dbReference type="Pfam" id="PF10518">
    <property type="entry name" value="TAT_signal"/>
    <property type="match status" value="1"/>
</dbReference>
<dbReference type="SMART" id="SM00926">
    <property type="entry name" value="Molybdop_Fe4S4"/>
    <property type="match status" value="1"/>
</dbReference>
<dbReference type="SUPFAM" id="SSF50692">
    <property type="entry name" value="ADC-like"/>
    <property type="match status" value="1"/>
</dbReference>
<dbReference type="SUPFAM" id="SSF53706">
    <property type="entry name" value="Formate dehydrogenase/DMSO reductase, domains 1-3"/>
    <property type="match status" value="1"/>
</dbReference>
<dbReference type="PROSITE" id="PS51669">
    <property type="entry name" value="4FE4S_MOW_BIS_MGD"/>
    <property type="match status" value="1"/>
</dbReference>
<dbReference type="PROSITE" id="PS00551">
    <property type="entry name" value="MOLYBDOPTERIN_PROK_1"/>
    <property type="match status" value="1"/>
</dbReference>
<dbReference type="PROSITE" id="PS51318">
    <property type="entry name" value="TAT"/>
    <property type="match status" value="1"/>
</dbReference>
<reference key="1">
    <citation type="submission" date="2008-01" db="EMBL/GenBank/DDBJ databases">
        <title>Complete sequence of Shewanella halifaxensis HAW-EB4.</title>
        <authorList>
            <consortium name="US DOE Joint Genome Institute"/>
            <person name="Copeland A."/>
            <person name="Lucas S."/>
            <person name="Lapidus A."/>
            <person name="Glavina del Rio T."/>
            <person name="Dalin E."/>
            <person name="Tice H."/>
            <person name="Bruce D."/>
            <person name="Goodwin L."/>
            <person name="Pitluck S."/>
            <person name="Sims D."/>
            <person name="Brettin T."/>
            <person name="Detter J.C."/>
            <person name="Han C."/>
            <person name="Kuske C.R."/>
            <person name="Schmutz J."/>
            <person name="Larimer F."/>
            <person name="Land M."/>
            <person name="Hauser L."/>
            <person name="Kyrpides N."/>
            <person name="Kim E."/>
            <person name="Zhao J.-S."/>
            <person name="Richardson P."/>
        </authorList>
    </citation>
    <scope>NUCLEOTIDE SEQUENCE [LARGE SCALE GENOMIC DNA]</scope>
    <source>
        <strain>HAW-EB4</strain>
    </source>
</reference>
<evidence type="ECO:0000255" key="1">
    <source>
        <dbReference type="HAMAP-Rule" id="MF_01630"/>
    </source>
</evidence>
<sequence length="826" mass="92339">MSISRREFLKANAAVAAATAVGATLPVKIVEAAEQKDNIKWDKAPCRFCGVGCSVLVGTDNGKVVATKGDPESPVNKGLNCIKGYFLSKIMYGKDRLTTPLLRMKDGQYDKEGEFTPISWDSAFDIMADKWKDTLKTKGPTAVGMFGSGQWTVWEGYAASKLHKAGFLTNNIDPNARHCMASAVGGFMRTFGIDEPMGCYDDLEAADQFVLWGANMAEMHPILWARLSDRRLSSPTSRVHVLSTYENRSFDLADNAMVFRPQSDLVILNYVANYIIQNDAVNKDFVNKHTKFALGTTDIGYGLRPDHPLEKKAKNPGNGKSKPISFDEYAKFVSSYTLEYAAEMSGVEPEKLELMAKAYADPNVKMMSLWTMGINQHTRGVWANNMLYNIHLLTGKIATPGNSPFSLTGQPSACGTAREVGTFAHRLPADMVVANPKHREITEKLWQVPAGTIPPKPGFHAVLQSRMLKDGKLNCYWTMCTNNMQAGPNINDEMYPGFRNPENFIVVSDPYPTVTAMAADLILPTAMWVEKEGAYGNAERRTHMWHQQVKAPEGAKSDLWQLMEFSKRFKVSEVWPAELIAKQPELADKTLFDVLYANGVVDKFPSSECKGQYNDEADAFGFYVQKGLFEEYAQFGRGHAHDLADFDTYHETRGLRWPVVDGKETLRRFSKGDPYVKGDKEFDFYGKPDGKAVIFALPFEPAAEEPNEEYDIWLSTGRVLEHWHTGSMTARVPELYRAYPDAQIFMHPEDAKARGLKRGDEVIVASPRGEVKTRVETKGRNKPPRGVAFMPFFDARQLVNKLILDATDPLSKETDFKKCPVKVMKA</sequence>